<keyword id="KW-0004">4Fe-4S</keyword>
<keyword id="KW-0963">Cytoplasm</keyword>
<keyword id="KW-0408">Iron</keyword>
<keyword id="KW-0411">Iron-sulfur</keyword>
<keyword id="KW-0479">Metal-binding</keyword>
<keyword id="KW-1185">Reference proteome</keyword>
<keyword id="KW-0949">S-adenosyl-L-methionine</keyword>
<keyword id="KW-0808">Transferase</keyword>
<proteinExistence type="inferred from homology"/>
<accession>B0CB83</accession>
<feature type="chain" id="PRO_0000374671" description="Ribosomal protein uS12 methylthiotransferase RimO">
    <location>
        <begin position="1"/>
        <end position="443"/>
    </location>
</feature>
<feature type="domain" description="MTTase N-terminal" evidence="1">
    <location>
        <begin position="5"/>
        <end position="116"/>
    </location>
</feature>
<feature type="domain" description="Radical SAM core" evidence="2">
    <location>
        <begin position="140"/>
        <end position="370"/>
    </location>
</feature>
<feature type="domain" description="TRAM" evidence="1">
    <location>
        <begin position="372"/>
        <end position="442"/>
    </location>
</feature>
<feature type="binding site" evidence="1">
    <location>
        <position position="14"/>
    </location>
    <ligand>
        <name>[4Fe-4S] cluster</name>
        <dbReference type="ChEBI" id="CHEBI:49883"/>
        <label>1</label>
    </ligand>
</feature>
<feature type="binding site" evidence="1">
    <location>
        <position position="50"/>
    </location>
    <ligand>
        <name>[4Fe-4S] cluster</name>
        <dbReference type="ChEBI" id="CHEBI:49883"/>
        <label>1</label>
    </ligand>
</feature>
<feature type="binding site" evidence="1">
    <location>
        <position position="79"/>
    </location>
    <ligand>
        <name>[4Fe-4S] cluster</name>
        <dbReference type="ChEBI" id="CHEBI:49883"/>
        <label>1</label>
    </ligand>
</feature>
<feature type="binding site" evidence="1">
    <location>
        <position position="154"/>
    </location>
    <ligand>
        <name>[4Fe-4S] cluster</name>
        <dbReference type="ChEBI" id="CHEBI:49883"/>
        <label>2</label>
        <note>4Fe-4S-S-AdoMet</note>
    </ligand>
</feature>
<feature type="binding site" evidence="1">
    <location>
        <position position="158"/>
    </location>
    <ligand>
        <name>[4Fe-4S] cluster</name>
        <dbReference type="ChEBI" id="CHEBI:49883"/>
        <label>2</label>
        <note>4Fe-4S-S-AdoMet</note>
    </ligand>
</feature>
<feature type="binding site" evidence="1">
    <location>
        <position position="161"/>
    </location>
    <ligand>
        <name>[4Fe-4S] cluster</name>
        <dbReference type="ChEBI" id="CHEBI:49883"/>
        <label>2</label>
        <note>4Fe-4S-S-AdoMet</note>
    </ligand>
</feature>
<reference key="1">
    <citation type="journal article" date="2008" name="Proc. Natl. Acad. Sci. U.S.A.">
        <title>Niche adaptation and genome expansion in the chlorophyll d-producing cyanobacterium Acaryochloris marina.</title>
        <authorList>
            <person name="Swingley W.D."/>
            <person name="Chen M."/>
            <person name="Cheung P.C."/>
            <person name="Conrad A.L."/>
            <person name="Dejesa L.C."/>
            <person name="Hao J."/>
            <person name="Honchak B.M."/>
            <person name="Karbach L.E."/>
            <person name="Kurdoglu A."/>
            <person name="Lahiri S."/>
            <person name="Mastrian S.D."/>
            <person name="Miyashita H."/>
            <person name="Page L."/>
            <person name="Ramakrishna P."/>
            <person name="Satoh S."/>
            <person name="Sattley W.M."/>
            <person name="Shimada Y."/>
            <person name="Taylor H.L."/>
            <person name="Tomo T."/>
            <person name="Tsuchiya T."/>
            <person name="Wang Z.T."/>
            <person name="Raymond J."/>
            <person name="Mimuro M."/>
            <person name="Blankenship R.E."/>
            <person name="Touchman J.W."/>
        </authorList>
    </citation>
    <scope>NUCLEOTIDE SEQUENCE [LARGE SCALE GENOMIC DNA]</scope>
    <source>
        <strain>MBIC 11017</strain>
    </source>
</reference>
<protein>
    <recommendedName>
        <fullName evidence="1">Ribosomal protein uS12 methylthiotransferase RimO</fullName>
        <shortName evidence="1">uS12 MTTase</shortName>
        <shortName evidence="1">uS12 methylthiotransferase</shortName>
        <ecNumber evidence="1">2.8.4.4</ecNumber>
    </recommendedName>
    <alternativeName>
        <fullName evidence="1">Ribosomal protein uS12 (aspartate-C(3))-methylthiotransferase</fullName>
    </alternativeName>
    <alternativeName>
        <fullName evidence="1">Ribosome maturation factor RimO</fullName>
    </alternativeName>
</protein>
<gene>
    <name evidence="1" type="primary">rimO</name>
    <name type="ordered locus">AM1_1701</name>
</gene>
<evidence type="ECO:0000255" key="1">
    <source>
        <dbReference type="HAMAP-Rule" id="MF_01865"/>
    </source>
</evidence>
<evidence type="ECO:0000255" key="2">
    <source>
        <dbReference type="PROSITE-ProRule" id="PRU01266"/>
    </source>
</evidence>
<sequence length="443" mass="49235">MANQPSVAVAHLGCEKNRVDTEHMLGLLVEAGYPVDSDEAFADYVIVNTCSFIQAAREESVRTLVELAEANKKIVITGCMAQHFQEELLEELPEAVALVGTGDYHKIVDVIQRAEAGERVKEVSPEPTYIADETVPRYRTTTEGTAYVRIAEGCDYGCAFCIIPHLRGKQRSRSIESIVAEAQQLAAEGVQELILISQITTNYGIDLYGKPQLAELLRALGEVDVPWIRMHYAYPTGLTPEVMAAIQETDNVLPYLDLPLQHSHPEVLRAMNRPWQGQVNDQIIEKIKTALPDAVLRTTFIVGFPGETDEHFEHLCEFVQRHEFDHVGVFTFSPEEGTPAFDLPNQLPQDVMDARRDRLMALQQPISWQQNQQEVGKTVQVLIEQEHPGSGQLIGRSPRFSADVDGLVYIDPGEAPSPRLGSLTPVQITDADAYDLQGQLVSQ</sequence>
<dbReference type="EC" id="2.8.4.4" evidence="1"/>
<dbReference type="EMBL" id="CP000828">
    <property type="protein sequence ID" value="ABW26722.1"/>
    <property type="molecule type" value="Genomic_DNA"/>
</dbReference>
<dbReference type="RefSeq" id="WP_012162239.1">
    <property type="nucleotide sequence ID" value="NC_009925.1"/>
</dbReference>
<dbReference type="SMR" id="B0CB83"/>
<dbReference type="STRING" id="329726.AM1_1701"/>
<dbReference type="KEGG" id="amr:AM1_1701"/>
<dbReference type="eggNOG" id="COG0621">
    <property type="taxonomic scope" value="Bacteria"/>
</dbReference>
<dbReference type="HOGENOM" id="CLU_018697_0_1_3"/>
<dbReference type="OrthoDB" id="9805215at2"/>
<dbReference type="Proteomes" id="UP000000268">
    <property type="component" value="Chromosome"/>
</dbReference>
<dbReference type="GO" id="GO:0005829">
    <property type="term" value="C:cytosol"/>
    <property type="evidence" value="ECO:0007669"/>
    <property type="project" value="TreeGrafter"/>
</dbReference>
<dbReference type="GO" id="GO:0051539">
    <property type="term" value="F:4 iron, 4 sulfur cluster binding"/>
    <property type="evidence" value="ECO:0007669"/>
    <property type="project" value="UniProtKB-UniRule"/>
</dbReference>
<dbReference type="GO" id="GO:0035599">
    <property type="term" value="F:aspartic acid methylthiotransferase activity"/>
    <property type="evidence" value="ECO:0007669"/>
    <property type="project" value="TreeGrafter"/>
</dbReference>
<dbReference type="GO" id="GO:0046872">
    <property type="term" value="F:metal ion binding"/>
    <property type="evidence" value="ECO:0007669"/>
    <property type="project" value="UniProtKB-KW"/>
</dbReference>
<dbReference type="GO" id="GO:0103039">
    <property type="term" value="F:protein methylthiotransferase activity"/>
    <property type="evidence" value="ECO:0007669"/>
    <property type="project" value="UniProtKB-EC"/>
</dbReference>
<dbReference type="GO" id="GO:0006400">
    <property type="term" value="P:tRNA modification"/>
    <property type="evidence" value="ECO:0007669"/>
    <property type="project" value="InterPro"/>
</dbReference>
<dbReference type="CDD" id="cd01335">
    <property type="entry name" value="Radical_SAM"/>
    <property type="match status" value="1"/>
</dbReference>
<dbReference type="FunFam" id="3.80.30.20:FF:000001">
    <property type="entry name" value="tRNA-2-methylthio-N(6)-dimethylallyladenosine synthase 2"/>
    <property type="match status" value="1"/>
</dbReference>
<dbReference type="Gene3D" id="3.40.50.12160">
    <property type="entry name" value="Methylthiotransferase, N-terminal domain"/>
    <property type="match status" value="1"/>
</dbReference>
<dbReference type="Gene3D" id="2.40.50.140">
    <property type="entry name" value="Nucleic acid-binding proteins"/>
    <property type="match status" value="1"/>
</dbReference>
<dbReference type="Gene3D" id="3.80.30.20">
    <property type="entry name" value="tm_1862 like domain"/>
    <property type="match status" value="1"/>
</dbReference>
<dbReference type="HAMAP" id="MF_01865">
    <property type="entry name" value="MTTase_RimO"/>
    <property type="match status" value="1"/>
</dbReference>
<dbReference type="InterPro" id="IPR006638">
    <property type="entry name" value="Elp3/MiaA/NifB-like_rSAM"/>
</dbReference>
<dbReference type="InterPro" id="IPR005839">
    <property type="entry name" value="Methylthiotransferase"/>
</dbReference>
<dbReference type="InterPro" id="IPR020612">
    <property type="entry name" value="Methylthiotransferase_CS"/>
</dbReference>
<dbReference type="InterPro" id="IPR013848">
    <property type="entry name" value="Methylthiotransferase_N"/>
</dbReference>
<dbReference type="InterPro" id="IPR038135">
    <property type="entry name" value="Methylthiotransferase_N_sf"/>
</dbReference>
<dbReference type="InterPro" id="IPR012340">
    <property type="entry name" value="NA-bd_OB-fold"/>
</dbReference>
<dbReference type="InterPro" id="IPR005840">
    <property type="entry name" value="Ribosomal_uS12_MeSTrfase_RimO"/>
</dbReference>
<dbReference type="InterPro" id="IPR007197">
    <property type="entry name" value="rSAM"/>
</dbReference>
<dbReference type="InterPro" id="IPR023404">
    <property type="entry name" value="rSAM_horseshoe"/>
</dbReference>
<dbReference type="InterPro" id="IPR002792">
    <property type="entry name" value="TRAM_dom"/>
</dbReference>
<dbReference type="NCBIfam" id="TIGR01125">
    <property type="entry name" value="30S ribosomal protein S12 methylthiotransferase RimO"/>
    <property type="match status" value="1"/>
</dbReference>
<dbReference type="NCBIfam" id="TIGR00089">
    <property type="entry name" value="MiaB/RimO family radical SAM methylthiotransferase"/>
    <property type="match status" value="1"/>
</dbReference>
<dbReference type="PANTHER" id="PTHR43837">
    <property type="entry name" value="RIBOSOMAL PROTEIN S12 METHYLTHIOTRANSFERASE RIMO"/>
    <property type="match status" value="1"/>
</dbReference>
<dbReference type="PANTHER" id="PTHR43837:SF1">
    <property type="entry name" value="RIBOSOMAL PROTEIN US12 METHYLTHIOTRANSFERASE RIMO"/>
    <property type="match status" value="1"/>
</dbReference>
<dbReference type="Pfam" id="PF04055">
    <property type="entry name" value="Radical_SAM"/>
    <property type="match status" value="1"/>
</dbReference>
<dbReference type="Pfam" id="PF18693">
    <property type="entry name" value="TRAM_2"/>
    <property type="match status" value="1"/>
</dbReference>
<dbReference type="Pfam" id="PF00919">
    <property type="entry name" value="UPF0004"/>
    <property type="match status" value="1"/>
</dbReference>
<dbReference type="SFLD" id="SFLDG01082">
    <property type="entry name" value="B12-binding_domain_containing"/>
    <property type="match status" value="1"/>
</dbReference>
<dbReference type="SFLD" id="SFLDS00029">
    <property type="entry name" value="Radical_SAM"/>
    <property type="match status" value="1"/>
</dbReference>
<dbReference type="SFLD" id="SFLDF00274">
    <property type="entry name" value="ribosomal_protein_S12_methylth"/>
    <property type="match status" value="1"/>
</dbReference>
<dbReference type="SMART" id="SM00729">
    <property type="entry name" value="Elp3"/>
    <property type="match status" value="1"/>
</dbReference>
<dbReference type="SUPFAM" id="SSF102114">
    <property type="entry name" value="Radical SAM enzymes"/>
    <property type="match status" value="1"/>
</dbReference>
<dbReference type="PROSITE" id="PS51449">
    <property type="entry name" value="MTTASE_N"/>
    <property type="match status" value="1"/>
</dbReference>
<dbReference type="PROSITE" id="PS01278">
    <property type="entry name" value="MTTASE_RADICAL"/>
    <property type="match status" value="1"/>
</dbReference>
<dbReference type="PROSITE" id="PS51918">
    <property type="entry name" value="RADICAL_SAM"/>
    <property type="match status" value="1"/>
</dbReference>
<dbReference type="PROSITE" id="PS50926">
    <property type="entry name" value="TRAM"/>
    <property type="match status" value="1"/>
</dbReference>
<comment type="function">
    <text evidence="1">Catalyzes the methylthiolation of an aspartic acid residue of ribosomal protein uS12.</text>
</comment>
<comment type="catalytic activity">
    <reaction evidence="1">
        <text>L-aspartate(89)-[ribosomal protein uS12]-hydrogen + (sulfur carrier)-SH + AH2 + 2 S-adenosyl-L-methionine = 3-methylsulfanyl-L-aspartate(89)-[ribosomal protein uS12]-hydrogen + (sulfur carrier)-H + 5'-deoxyadenosine + L-methionine + A + S-adenosyl-L-homocysteine + 2 H(+)</text>
        <dbReference type="Rhea" id="RHEA:37087"/>
        <dbReference type="Rhea" id="RHEA-COMP:10460"/>
        <dbReference type="Rhea" id="RHEA-COMP:10461"/>
        <dbReference type="Rhea" id="RHEA-COMP:14737"/>
        <dbReference type="Rhea" id="RHEA-COMP:14739"/>
        <dbReference type="ChEBI" id="CHEBI:13193"/>
        <dbReference type="ChEBI" id="CHEBI:15378"/>
        <dbReference type="ChEBI" id="CHEBI:17319"/>
        <dbReference type="ChEBI" id="CHEBI:17499"/>
        <dbReference type="ChEBI" id="CHEBI:29917"/>
        <dbReference type="ChEBI" id="CHEBI:29961"/>
        <dbReference type="ChEBI" id="CHEBI:57844"/>
        <dbReference type="ChEBI" id="CHEBI:57856"/>
        <dbReference type="ChEBI" id="CHEBI:59789"/>
        <dbReference type="ChEBI" id="CHEBI:64428"/>
        <dbReference type="ChEBI" id="CHEBI:73599"/>
        <dbReference type="EC" id="2.8.4.4"/>
    </reaction>
</comment>
<comment type="cofactor">
    <cofactor evidence="1">
        <name>[4Fe-4S] cluster</name>
        <dbReference type="ChEBI" id="CHEBI:49883"/>
    </cofactor>
    <text evidence="1">Binds 2 [4Fe-4S] clusters. One cluster is coordinated with 3 cysteines and an exchangeable S-adenosyl-L-methionine.</text>
</comment>
<comment type="subcellular location">
    <subcellularLocation>
        <location evidence="1">Cytoplasm</location>
    </subcellularLocation>
</comment>
<comment type="similarity">
    <text evidence="1">Belongs to the methylthiotransferase family. RimO subfamily.</text>
</comment>
<name>RIMO_ACAM1</name>
<organism>
    <name type="scientific">Acaryochloris marina (strain MBIC 11017)</name>
    <dbReference type="NCBI Taxonomy" id="329726"/>
    <lineage>
        <taxon>Bacteria</taxon>
        <taxon>Bacillati</taxon>
        <taxon>Cyanobacteriota</taxon>
        <taxon>Cyanophyceae</taxon>
        <taxon>Acaryochloridales</taxon>
        <taxon>Acaryochloridaceae</taxon>
        <taxon>Acaryochloris</taxon>
    </lineage>
</organism>